<feature type="chain" id="PRO_0000301768" description="Vacuolar membrane-associated protein IML1">
    <location>
        <begin position="1"/>
        <end position="1889"/>
    </location>
</feature>
<feature type="domain" description="DEP" evidence="2">
    <location>
        <begin position="1331"/>
        <end position="1417"/>
    </location>
</feature>
<feature type="region of interest" description="Disordered" evidence="3">
    <location>
        <begin position="1"/>
        <end position="74"/>
    </location>
</feature>
<feature type="region of interest" description="Disordered" evidence="3">
    <location>
        <begin position="515"/>
        <end position="540"/>
    </location>
</feature>
<feature type="region of interest" description="Disordered" evidence="3">
    <location>
        <begin position="551"/>
        <end position="570"/>
    </location>
</feature>
<feature type="region of interest" description="Disordered" evidence="3">
    <location>
        <begin position="716"/>
        <end position="808"/>
    </location>
</feature>
<feature type="region of interest" description="Disordered" evidence="3">
    <location>
        <begin position="838"/>
        <end position="900"/>
    </location>
</feature>
<feature type="region of interest" description="Disordered" evidence="3">
    <location>
        <begin position="1252"/>
        <end position="1272"/>
    </location>
</feature>
<feature type="region of interest" description="Disordered" evidence="3">
    <location>
        <begin position="1424"/>
        <end position="1484"/>
    </location>
</feature>
<feature type="region of interest" description="Disordered" evidence="3">
    <location>
        <begin position="1724"/>
        <end position="1824"/>
    </location>
</feature>
<feature type="compositionally biased region" description="Polar residues" evidence="3">
    <location>
        <begin position="47"/>
        <end position="60"/>
    </location>
</feature>
<feature type="compositionally biased region" description="Basic and acidic residues" evidence="3">
    <location>
        <begin position="729"/>
        <end position="742"/>
    </location>
</feature>
<feature type="compositionally biased region" description="Polar residues" evidence="3">
    <location>
        <begin position="747"/>
        <end position="766"/>
    </location>
</feature>
<feature type="compositionally biased region" description="Polar residues" evidence="3">
    <location>
        <begin position="787"/>
        <end position="804"/>
    </location>
</feature>
<feature type="compositionally biased region" description="Polar residues" evidence="3">
    <location>
        <begin position="840"/>
        <end position="853"/>
    </location>
</feature>
<feature type="compositionally biased region" description="Low complexity" evidence="3">
    <location>
        <begin position="865"/>
        <end position="877"/>
    </location>
</feature>
<feature type="compositionally biased region" description="Low complexity" evidence="3">
    <location>
        <begin position="1737"/>
        <end position="1789"/>
    </location>
</feature>
<feature type="compositionally biased region" description="Low complexity" evidence="3">
    <location>
        <begin position="1801"/>
        <end position="1811"/>
    </location>
</feature>
<sequence length="1889" mass="211950">MPPPPRNSSSASLSATPGLAKGPNNNWPTHLRHFRRSSHDRSLEHAYSNSPGDTVSSNSTIRERPSSRLSSRLRTERRWTVTVNESLARDEVLLNLDLIGDDIQPGSLVAIDVVKADSEKPLQNSHPRHFQDRKDSATAGCVERRYICVAKDMPKELKARYASVEVYVAKHVADAFAMRKGTQVTLTPIDENNPALEASHVELCFKDQYLSRADMWRMAVGELAERTVYKGQMVLFMGTVKAQVTAVYVDGRKAQSAFFGRHTKPVFRSESARYVLFIQMAREMWDFDQDGSGEIMFNKVVNGFLPALFKKWAAMKVKHLVTIVLFARVEYDTGISTELASASAHHGYYTGVQASEDQRPYKDFYRVVVSEMGSGEWTRILHQLKREFNYFRKDISTYHQKAMEPTNSGEDSGEQEVLLNRIKAEASRAIHGNFLEAINMASSLYAHDYIDRDLTRTGVSVVVISPSPGVFEVEYDALRRTTEALACNGIGIDLICIPNIPLHSVPLFRYRNPRQPGQVQRKSKVDISQGSTPKQTTLTFGSYSSLAGSYSPNKRIEGSRNGEPAGPLSSQEEWVSAIPQWLHVSYWTGASEEELSYQGIALSVSDATQKLPSDEFPIRCRMYDLQMRSVMETNEIETKPLHTDPCYPLNAVLASQISKPHFDLDNDGNVIIPNARVPETLFDHVFGFQKFAPDRHRKPGEKSIWRQLQEYDDCRARLPSHRNANQTRRCRDHEETPRRQALEDTSPLGTSYTDRRPSTASQQTLPELSPYHRPTSQRLEVPPVNRKSMSAQSNKSEPKASSSPLKAPKFMRHISLGNRGFGIAAPKVATAEVSMESAGASKTLTPSRSSQDLRVTPSKPGQRPSSSRRLTGGTSTSALSPALSPFSFAPGPQFPTDSPTRPIVIRNQQLEPAAMLSGSSILATTLRPEPVGHDRDFRYSNAIRAEDAKKLYNSKLLAGAIPELPSTLSPKTALSPWLTVLNPSNPDTNDVDMAMLYSRWQHVFPRPQEMRIMKWKGLCSPAAVPLTSEYFPSRDQFEAQYERQPYNVSQDFDEELQEEPKSRDELLRELVSLRFSQGFQIVVGPAVAKAFGQKQVKVADIFSRNHMMEDGISIFMSVGNTIHQLSCVNGTEVEVNIFVRKPTDSFGPSFSSPTLYKPAIRTLLDGGYRTSEFDLVAPKAERNWNYIDAFIAGHNDELTEHLRFWRARFVLIPMTGRRSSMPGTETGDNEEEIRIEGIRKLAQMWQKHRYVPPNERRLQGSGSTRSKKDTNPLDIVYKTEDASVVIAAELETLPLLEGLDRKGQLVRNREPFSKKNINLAALAEAMQQPVENGGVRMQNRRWHFRLHYNCFIGSDMTSWLLDNFDDLEDREEAEALGKRLMVPDDKEKEGKKDSGLFVHVEKRHQFRDGQYFYQISNEFAKPHPPGWFNAKRGQGSMPSTPMGEQPPRDGRPSFSRPTSIHEEDSPESGETTPTAPQAPAGNKPKVVLSRVIKYDVDHRKRSYRPEMVELHYDRLHNPDNCYHLRIDWMNVTVQKLVEDVIENWAREAGQYGLRLVEVPIAEASAISEINPFRRPYKIKLAVPPPDQSPVTYYDPTSFTPQAHPGRQFYQKAILRRFDFVLDMEAASNFPSNVDVSYSWGRPDFRYTQYIHRSGSILAEITDDGHFLVLANRLYSSRAFAAREREMQKELRVERQEQGPAIGTPGLGSSIRVITPSSYTPYNIPTPLPPYDSSPVASPALRPVTTTTTATTTTAAPTSSSLLSPVVRPTLSAPGTTPGSTSASGTPGLTHTPNQGQPGKPPSTSATTTTACAGGGGPGSGWSTWTTREPEWIKDELENFCLDAAALEAFYRELRTAARATTSAGRCGHDAGFWCGWRWCWCWGWAREWD</sequence>
<keyword id="KW-0472">Membrane</keyword>
<keyword id="KW-1185">Reference proteome</keyword>
<keyword id="KW-0926">Vacuole</keyword>
<accession>Q2H0S0</accession>
<comment type="subcellular location">
    <subcellularLocation>
        <location evidence="1">Vacuole membrane</location>
        <topology evidence="1">Peripheral membrane protein</topology>
    </subcellularLocation>
</comment>
<comment type="similarity">
    <text evidence="4">Belongs to the IML1 family.</text>
</comment>
<organism>
    <name type="scientific">Chaetomium globosum (strain ATCC 6205 / CBS 148.51 / DSM 1962 / NBRC 6347 / NRRL 1970)</name>
    <name type="common">Soil fungus</name>
    <dbReference type="NCBI Taxonomy" id="306901"/>
    <lineage>
        <taxon>Eukaryota</taxon>
        <taxon>Fungi</taxon>
        <taxon>Dikarya</taxon>
        <taxon>Ascomycota</taxon>
        <taxon>Pezizomycotina</taxon>
        <taxon>Sordariomycetes</taxon>
        <taxon>Sordariomycetidae</taxon>
        <taxon>Sordariales</taxon>
        <taxon>Chaetomiaceae</taxon>
        <taxon>Chaetomium</taxon>
    </lineage>
</organism>
<reference key="1">
    <citation type="journal article" date="2015" name="Genome Announc.">
        <title>Draft genome sequence of the cellulolytic fungus Chaetomium globosum.</title>
        <authorList>
            <person name="Cuomo C.A."/>
            <person name="Untereiner W.A."/>
            <person name="Ma L.-J."/>
            <person name="Grabherr M."/>
            <person name="Birren B.W."/>
        </authorList>
    </citation>
    <scope>NUCLEOTIDE SEQUENCE [LARGE SCALE GENOMIC DNA]</scope>
    <source>
        <strain>ATCC 6205 / CBS 148.51 / DSM 1962 / NBRC 6347 / NRRL 1970</strain>
    </source>
</reference>
<gene>
    <name type="primary">IML1</name>
    <name type="ORF">CHGG_04626</name>
</gene>
<name>IML1_CHAGB</name>
<protein>
    <recommendedName>
        <fullName>Vacuolar membrane-associated protein IML1</fullName>
    </recommendedName>
</protein>
<proteinExistence type="inferred from homology"/>
<evidence type="ECO:0000250" key="1"/>
<evidence type="ECO:0000255" key="2">
    <source>
        <dbReference type="PROSITE-ProRule" id="PRU00066"/>
    </source>
</evidence>
<evidence type="ECO:0000256" key="3">
    <source>
        <dbReference type="SAM" id="MobiDB-lite"/>
    </source>
</evidence>
<evidence type="ECO:0000305" key="4"/>
<dbReference type="EMBL" id="CH408032">
    <property type="protein sequence ID" value="EAQ88007.1"/>
    <property type="molecule type" value="Genomic_DNA"/>
</dbReference>
<dbReference type="RefSeq" id="XP_001223840.1">
    <property type="nucleotide sequence ID" value="XM_001223839.1"/>
</dbReference>
<dbReference type="SMR" id="Q2H0S0"/>
<dbReference type="FunCoup" id="Q2H0S0">
    <property type="interactions" value="574"/>
</dbReference>
<dbReference type="STRING" id="306901.Q2H0S0"/>
<dbReference type="GeneID" id="4392909"/>
<dbReference type="VEuPathDB" id="FungiDB:CHGG_04626"/>
<dbReference type="eggNOG" id="KOG3572">
    <property type="taxonomic scope" value="Eukaryota"/>
</dbReference>
<dbReference type="HOGENOM" id="CLU_000935_0_0_1"/>
<dbReference type="InParanoid" id="Q2H0S0"/>
<dbReference type="OMA" id="SWMNATP"/>
<dbReference type="OrthoDB" id="39497at2759"/>
<dbReference type="Proteomes" id="UP000001056">
    <property type="component" value="Unassembled WGS sequence"/>
</dbReference>
<dbReference type="GO" id="GO:1990130">
    <property type="term" value="C:GATOR1 complex"/>
    <property type="evidence" value="ECO:0007669"/>
    <property type="project" value="TreeGrafter"/>
</dbReference>
<dbReference type="GO" id="GO:0005774">
    <property type="term" value="C:vacuolar membrane"/>
    <property type="evidence" value="ECO:0007669"/>
    <property type="project" value="UniProtKB-SubCell"/>
</dbReference>
<dbReference type="GO" id="GO:0005096">
    <property type="term" value="F:GTPase activator activity"/>
    <property type="evidence" value="ECO:0007669"/>
    <property type="project" value="InterPro"/>
</dbReference>
<dbReference type="GO" id="GO:0035556">
    <property type="term" value="P:intracellular signal transduction"/>
    <property type="evidence" value="ECO:0007669"/>
    <property type="project" value="InterPro"/>
</dbReference>
<dbReference type="GO" id="GO:1904262">
    <property type="term" value="P:negative regulation of TORC1 signaling"/>
    <property type="evidence" value="ECO:0007669"/>
    <property type="project" value="TreeGrafter"/>
</dbReference>
<dbReference type="GO" id="GO:0010508">
    <property type="term" value="P:positive regulation of autophagy"/>
    <property type="evidence" value="ECO:0007669"/>
    <property type="project" value="TreeGrafter"/>
</dbReference>
<dbReference type="CDD" id="cd04449">
    <property type="entry name" value="DEP_DEPDC5-like"/>
    <property type="match status" value="1"/>
</dbReference>
<dbReference type="Gene3D" id="1.10.10.10">
    <property type="entry name" value="Winged helix-like DNA-binding domain superfamily/Winged helix DNA-binding domain"/>
    <property type="match status" value="1"/>
</dbReference>
<dbReference type="InterPro" id="IPR000591">
    <property type="entry name" value="DEP_dom"/>
</dbReference>
<dbReference type="InterPro" id="IPR045838">
    <property type="entry name" value="DEPDC5_CTD"/>
</dbReference>
<dbReference type="InterPro" id="IPR027244">
    <property type="entry name" value="IML1"/>
</dbReference>
<dbReference type="InterPro" id="IPR048255">
    <property type="entry name" value="IML1_N"/>
</dbReference>
<dbReference type="InterPro" id="IPR036388">
    <property type="entry name" value="WH-like_DNA-bd_sf"/>
</dbReference>
<dbReference type="InterPro" id="IPR036390">
    <property type="entry name" value="WH_DNA-bd_sf"/>
</dbReference>
<dbReference type="PANTHER" id="PTHR13179">
    <property type="entry name" value="DEP DOMAIN CONTAINING PROTEIN 5"/>
    <property type="match status" value="1"/>
</dbReference>
<dbReference type="PANTHER" id="PTHR13179:SF8">
    <property type="entry name" value="GATOR COMPLEX PROTEIN DEPDC5"/>
    <property type="match status" value="1"/>
</dbReference>
<dbReference type="Pfam" id="PF00610">
    <property type="entry name" value="DEP"/>
    <property type="match status" value="1"/>
</dbReference>
<dbReference type="Pfam" id="PF19418">
    <property type="entry name" value="DEPDC5_CTD"/>
    <property type="match status" value="1"/>
</dbReference>
<dbReference type="Pfam" id="PF12257">
    <property type="entry name" value="IML1"/>
    <property type="match status" value="1"/>
</dbReference>
<dbReference type="SMART" id="SM00049">
    <property type="entry name" value="DEP"/>
    <property type="match status" value="1"/>
</dbReference>
<dbReference type="SUPFAM" id="SSF46785">
    <property type="entry name" value="Winged helix' DNA-binding domain"/>
    <property type="match status" value="1"/>
</dbReference>
<dbReference type="PROSITE" id="PS50186">
    <property type="entry name" value="DEP"/>
    <property type="match status" value="1"/>
</dbReference>